<proteinExistence type="inferred from homology"/>
<protein>
    <recommendedName>
        <fullName>NADH-ubiquinone oxidoreductase chain 4L</fullName>
        <ecNumber>7.1.1.2</ecNumber>
    </recommendedName>
    <alternativeName>
        <fullName>NADH dehydrogenase subunit 4L</fullName>
    </alternativeName>
</protein>
<comment type="function">
    <text evidence="1">Core subunit of the mitochondrial membrane respiratory chain NADH dehydrogenase (Complex I) which catalyzes electron transfer from NADH through the respiratory chain, using ubiquinone as an electron acceptor. Part of the enzyme membrane arm which is embedded in the lipid bilayer and involved in proton translocation.</text>
</comment>
<comment type="catalytic activity">
    <reaction evidence="1">
        <text>a ubiquinone + NADH + 5 H(+)(in) = a ubiquinol + NAD(+) + 4 H(+)(out)</text>
        <dbReference type="Rhea" id="RHEA:29091"/>
        <dbReference type="Rhea" id="RHEA-COMP:9565"/>
        <dbReference type="Rhea" id="RHEA-COMP:9566"/>
        <dbReference type="ChEBI" id="CHEBI:15378"/>
        <dbReference type="ChEBI" id="CHEBI:16389"/>
        <dbReference type="ChEBI" id="CHEBI:17976"/>
        <dbReference type="ChEBI" id="CHEBI:57540"/>
        <dbReference type="ChEBI" id="CHEBI:57945"/>
        <dbReference type="EC" id="7.1.1.2"/>
    </reaction>
    <physiologicalReaction direction="left-to-right" evidence="1">
        <dbReference type="Rhea" id="RHEA:29092"/>
    </physiologicalReaction>
</comment>
<comment type="subunit">
    <text evidence="2">Core subunit of respiratory chain NADH dehydrogenase (Complex I) which is composed of 45 different subunits.</text>
</comment>
<comment type="subcellular location">
    <subcellularLocation>
        <location evidence="2">Mitochondrion inner membrane</location>
        <topology evidence="3">Multi-pass membrane protein</topology>
    </subcellularLocation>
</comment>
<comment type="similarity">
    <text evidence="4">Belongs to the complex I subunit 4L family.</text>
</comment>
<feature type="chain" id="PRO_0000275002" description="NADH-ubiquinone oxidoreductase chain 4L">
    <location>
        <begin position="1"/>
        <end position="98"/>
    </location>
</feature>
<feature type="transmembrane region" description="Helical" evidence="3">
    <location>
        <begin position="1"/>
        <end position="21"/>
    </location>
</feature>
<feature type="transmembrane region" description="Helical" evidence="3">
    <location>
        <begin position="29"/>
        <end position="49"/>
    </location>
</feature>
<feature type="transmembrane region" description="Helical" evidence="3">
    <location>
        <begin position="61"/>
        <end position="81"/>
    </location>
</feature>
<geneLocation type="mitochondrion"/>
<dbReference type="EC" id="7.1.1.2"/>
<dbReference type="EMBL" id="AJ428849">
    <property type="protein sequence ID" value="CAD21801.1"/>
    <property type="molecule type" value="Genomic_DNA"/>
</dbReference>
<dbReference type="RefSeq" id="NP_659371.1">
    <property type="nucleotide sequence ID" value="NC_004031.1"/>
</dbReference>
<dbReference type="SMR" id="Q8LX57"/>
<dbReference type="GeneID" id="804972"/>
<dbReference type="KEGG" id="gvr:804972"/>
<dbReference type="CTD" id="4539"/>
<dbReference type="OrthoDB" id="6146597at2759"/>
<dbReference type="Proteomes" id="UP000694923">
    <property type="component" value="Mitochondrion MT"/>
</dbReference>
<dbReference type="GO" id="GO:0005743">
    <property type="term" value="C:mitochondrial inner membrane"/>
    <property type="evidence" value="ECO:0000250"/>
    <property type="project" value="UniProtKB"/>
</dbReference>
<dbReference type="GO" id="GO:0045271">
    <property type="term" value="C:respiratory chain complex I"/>
    <property type="evidence" value="ECO:0000250"/>
    <property type="project" value="UniProtKB"/>
</dbReference>
<dbReference type="GO" id="GO:0008137">
    <property type="term" value="F:NADH dehydrogenase (ubiquinone) activity"/>
    <property type="evidence" value="ECO:0000250"/>
    <property type="project" value="UniProtKB"/>
</dbReference>
<dbReference type="GO" id="GO:0042773">
    <property type="term" value="P:ATP synthesis coupled electron transport"/>
    <property type="evidence" value="ECO:0007669"/>
    <property type="project" value="InterPro"/>
</dbReference>
<dbReference type="FunFam" id="1.10.287.3510:FF:000002">
    <property type="entry name" value="NADH-ubiquinone oxidoreductase chain 4L"/>
    <property type="match status" value="1"/>
</dbReference>
<dbReference type="Gene3D" id="1.10.287.3510">
    <property type="match status" value="1"/>
</dbReference>
<dbReference type="InterPro" id="IPR001133">
    <property type="entry name" value="NADH_UbQ_OxRdtase_chain4L/K"/>
</dbReference>
<dbReference type="InterPro" id="IPR039428">
    <property type="entry name" value="NUOK/Mnh_C1-like"/>
</dbReference>
<dbReference type="PANTHER" id="PTHR11434:SF0">
    <property type="entry name" value="NADH-UBIQUINONE OXIDOREDUCTASE CHAIN 4L"/>
    <property type="match status" value="1"/>
</dbReference>
<dbReference type="PANTHER" id="PTHR11434">
    <property type="entry name" value="NADH-UBIQUINONE OXIDOREDUCTASE SUBUNIT ND4L"/>
    <property type="match status" value="1"/>
</dbReference>
<dbReference type="Pfam" id="PF00420">
    <property type="entry name" value="Oxidored_q2"/>
    <property type="match status" value="1"/>
</dbReference>
<keyword id="KW-0249">Electron transport</keyword>
<keyword id="KW-0472">Membrane</keyword>
<keyword id="KW-0496">Mitochondrion</keyword>
<keyword id="KW-0999">Mitochondrion inner membrane</keyword>
<keyword id="KW-0520">NAD</keyword>
<keyword id="KW-0679">Respiratory chain</keyword>
<keyword id="KW-1278">Translocase</keyword>
<keyword id="KW-0812">Transmembrane</keyword>
<keyword id="KW-1133">Transmembrane helix</keyword>
<keyword id="KW-0813">Transport</keyword>
<keyword id="KW-0830">Ubiquinone</keyword>
<sequence>MPPIYINIILAYTASLVGLLMYRSHFMSSLLCLEGMMLSLFILATILSLNLHFTLSFTLPIILLIFAGCETAVGLALLVMISDIYGLDHVQNLNLLQC</sequence>
<evidence type="ECO:0000250" key="1">
    <source>
        <dbReference type="UniProtKB" id="P03901"/>
    </source>
</evidence>
<evidence type="ECO:0000250" key="2">
    <source>
        <dbReference type="UniProtKB" id="P03902"/>
    </source>
</evidence>
<evidence type="ECO:0000255" key="3"/>
<evidence type="ECO:0000305" key="4"/>
<gene>
    <name type="primary">MT-ND4L</name>
    <name type="synonym">MTND4L</name>
    <name type="synonym">NADH4L</name>
    <name type="synonym">ND4L</name>
</gene>
<reference key="1">
    <citation type="journal article" date="2002" name="Proc. Natl. Acad. Sci. U.S.A.">
        <title>Mammalian mitogenomic relationships and the root of the eutherian tree.</title>
        <authorList>
            <person name="Arnason U."/>
            <person name="Adegoke J.A."/>
            <person name="Bodin K."/>
            <person name="Born E.W."/>
            <person name="Esa Y.B."/>
            <person name="Gullberg A."/>
            <person name="Nilsson M."/>
            <person name="Short R.V."/>
            <person name="Xu X."/>
            <person name="Janke A."/>
        </authorList>
    </citation>
    <scope>NUCLEOTIDE SEQUENCE [GENOMIC DNA]</scope>
</reference>
<name>NU4LM_GALVR</name>
<accession>Q8LX57</accession>
<organism>
    <name type="scientific">Galeopterus variegatus</name>
    <name type="common">Malayan flying lemur</name>
    <name type="synonym">Cynocephalus variegatus</name>
    <dbReference type="NCBI Taxonomy" id="482537"/>
    <lineage>
        <taxon>Eukaryota</taxon>
        <taxon>Metazoa</taxon>
        <taxon>Chordata</taxon>
        <taxon>Craniata</taxon>
        <taxon>Vertebrata</taxon>
        <taxon>Euteleostomi</taxon>
        <taxon>Mammalia</taxon>
        <taxon>Eutheria</taxon>
        <taxon>Euarchontoglires</taxon>
        <taxon>Dermoptera</taxon>
        <taxon>Cynocephalidae</taxon>
        <taxon>Galeopterus</taxon>
    </lineage>
</organism>